<accession>P76049</accession>
<accession>P76844</accession>
<accession>P77483</accession>
<keyword id="KW-0002">3D-structure</keyword>
<keyword id="KW-1185">Reference proteome</keyword>
<dbReference type="EMBL" id="U00096">
    <property type="protein sequence ID" value="AAC74409.2"/>
    <property type="molecule type" value="Genomic_DNA"/>
</dbReference>
<dbReference type="EMBL" id="AP009048">
    <property type="protein sequence ID" value="BAA14909.2"/>
    <property type="status" value="ALT_INIT"/>
    <property type="molecule type" value="Genomic_DNA"/>
</dbReference>
<dbReference type="PIR" id="B64882">
    <property type="entry name" value="B64882"/>
</dbReference>
<dbReference type="RefSeq" id="NP_415843.2">
    <property type="nucleotide sequence ID" value="NC_000913.3"/>
</dbReference>
<dbReference type="RefSeq" id="WP_001300523.1">
    <property type="nucleotide sequence ID" value="NZ_SSZK01000012.1"/>
</dbReference>
<dbReference type="PDB" id="5XB6">
    <property type="method" value="X-ray"/>
    <property type="resolution" value="2.00 A"/>
    <property type="chains" value="A/B/C/D/E/F/G/H/I/J/K/L=1-306"/>
</dbReference>
<dbReference type="PDBsum" id="5XB6"/>
<dbReference type="SMR" id="P76049"/>
<dbReference type="BioGRID" id="4262989">
    <property type="interactions" value="14"/>
</dbReference>
<dbReference type="DIP" id="DIP-11616N"/>
<dbReference type="FunCoup" id="P76049">
    <property type="interactions" value="52"/>
</dbReference>
<dbReference type="IntAct" id="P76049">
    <property type="interactions" value="3"/>
</dbReference>
<dbReference type="STRING" id="511145.b1327"/>
<dbReference type="ESTHER" id="ecoli-ycjy">
    <property type="family name" value="YcjY-like"/>
</dbReference>
<dbReference type="jPOST" id="P76049"/>
<dbReference type="PaxDb" id="511145-b1327"/>
<dbReference type="EnsemblBacteria" id="AAC74409">
    <property type="protein sequence ID" value="AAC74409"/>
    <property type="gene ID" value="b1327"/>
</dbReference>
<dbReference type="GeneID" id="945988"/>
<dbReference type="KEGG" id="ecj:JW5804"/>
<dbReference type="KEGG" id="eco:b1327"/>
<dbReference type="KEGG" id="ecoc:C3026_07770"/>
<dbReference type="PATRIC" id="fig|1411691.4.peg.950"/>
<dbReference type="EchoBASE" id="EB3681"/>
<dbReference type="eggNOG" id="COG1073">
    <property type="taxonomic scope" value="Bacteria"/>
</dbReference>
<dbReference type="HOGENOM" id="CLU_048587_0_0_6"/>
<dbReference type="InParanoid" id="P76049"/>
<dbReference type="OMA" id="LMRWDAT"/>
<dbReference type="OrthoDB" id="9805123at2"/>
<dbReference type="PhylomeDB" id="P76049"/>
<dbReference type="BioCyc" id="EcoCyc:G6663-MONOMER"/>
<dbReference type="PRO" id="PR:P76049"/>
<dbReference type="Proteomes" id="UP000000625">
    <property type="component" value="Chromosome"/>
</dbReference>
<dbReference type="GO" id="GO:0016787">
    <property type="term" value="F:hydrolase activity"/>
    <property type="evidence" value="ECO:0007669"/>
    <property type="project" value="InterPro"/>
</dbReference>
<dbReference type="GO" id="GO:0051301">
    <property type="term" value="P:cell division"/>
    <property type="evidence" value="ECO:0000315"/>
    <property type="project" value="EcoCyc"/>
</dbReference>
<dbReference type="FunFam" id="1.10.10.800:FF:000001">
    <property type="entry name" value="Alpha/beta hydrolase"/>
    <property type="match status" value="1"/>
</dbReference>
<dbReference type="Gene3D" id="1.10.10.800">
    <property type="match status" value="1"/>
</dbReference>
<dbReference type="Gene3D" id="3.40.50.1820">
    <property type="entry name" value="alpha/beta hydrolase"/>
    <property type="match status" value="1"/>
</dbReference>
<dbReference type="InterPro" id="IPR029058">
    <property type="entry name" value="AB_hydrolase_fold"/>
</dbReference>
<dbReference type="InterPro" id="IPR051411">
    <property type="entry name" value="Polyketide_trans_af380"/>
</dbReference>
<dbReference type="InterPro" id="IPR000383">
    <property type="entry name" value="Xaa-Pro-like_dom"/>
</dbReference>
<dbReference type="PANTHER" id="PTHR47751">
    <property type="entry name" value="SUPERFAMILY HYDROLASE, PUTATIVE (AFU_ORTHOLOGUE AFUA_2G16580)-RELATED"/>
    <property type="match status" value="1"/>
</dbReference>
<dbReference type="PANTHER" id="PTHR47751:SF1">
    <property type="entry name" value="SUPERFAMILY HYDROLASE, PUTATIVE (AFU_ORTHOLOGUE AFUA_2G16580)-RELATED"/>
    <property type="match status" value="1"/>
</dbReference>
<dbReference type="Pfam" id="PF02129">
    <property type="entry name" value="Peptidase_S15"/>
    <property type="match status" value="1"/>
</dbReference>
<dbReference type="SUPFAM" id="SSF53474">
    <property type="entry name" value="alpha/beta-Hydrolases"/>
    <property type="match status" value="1"/>
</dbReference>
<sequence length="306" mass="33659">MMNNKVSFTNSNNPTISLSAVIYFPPKFDETRQYQAIVLSHPGGGVKEQTAGTYAKKLAEKGFVTIAYDASYQGESGGEPRQLENPYIRTEDISAVIDYLTTLSYVDNTRIGAMGICAGAGYTANAAIQDRRIKAIGTVSAVNIGSIFRNGWENNVKSIDALPYVEAGSNARTSDISSGEYAIMPLAPMKESDAPNEELRQAWEYYHTPRAQYPTAPGYATLRSLNQIITYDAYHMAEVYLTQPTQIVAGSQAGSKWMSDDLYDRASSQDKRYHIVEGANHMDLYDGKAYVAEAISVLAPFFEETL</sequence>
<protein>
    <recommendedName>
        <fullName>Uncharacterized protein YcjY</fullName>
    </recommendedName>
</protein>
<organism>
    <name type="scientific">Escherichia coli (strain K12)</name>
    <dbReference type="NCBI Taxonomy" id="83333"/>
    <lineage>
        <taxon>Bacteria</taxon>
        <taxon>Pseudomonadati</taxon>
        <taxon>Pseudomonadota</taxon>
        <taxon>Gammaproteobacteria</taxon>
        <taxon>Enterobacterales</taxon>
        <taxon>Enterobacteriaceae</taxon>
        <taxon>Escherichia</taxon>
    </lineage>
</organism>
<evidence type="ECO:0000305" key="1"/>
<evidence type="ECO:0007829" key="2">
    <source>
        <dbReference type="PDB" id="5XB6"/>
    </source>
</evidence>
<reference key="1">
    <citation type="journal article" date="1996" name="DNA Res.">
        <title>A 570-kb DNA sequence of the Escherichia coli K-12 genome corresponding to the 28.0-40.1 min region on the linkage map.</title>
        <authorList>
            <person name="Aiba H."/>
            <person name="Baba T."/>
            <person name="Fujita K."/>
            <person name="Hayashi K."/>
            <person name="Inada T."/>
            <person name="Isono K."/>
            <person name="Itoh T."/>
            <person name="Kasai H."/>
            <person name="Kashimoto K."/>
            <person name="Kimura S."/>
            <person name="Kitakawa M."/>
            <person name="Kitagawa M."/>
            <person name="Makino K."/>
            <person name="Miki T."/>
            <person name="Mizobuchi K."/>
            <person name="Mori H."/>
            <person name="Mori T."/>
            <person name="Motomura K."/>
            <person name="Nakade S."/>
            <person name="Nakamura Y."/>
            <person name="Nashimoto H."/>
            <person name="Nishio Y."/>
            <person name="Oshima T."/>
            <person name="Saito N."/>
            <person name="Sampei G."/>
            <person name="Seki Y."/>
            <person name="Sivasundaram S."/>
            <person name="Tagami H."/>
            <person name="Takeda J."/>
            <person name="Takemoto K."/>
            <person name="Takeuchi Y."/>
            <person name="Wada C."/>
            <person name="Yamamoto Y."/>
            <person name="Horiuchi T."/>
        </authorList>
    </citation>
    <scope>NUCLEOTIDE SEQUENCE [LARGE SCALE GENOMIC DNA]</scope>
    <source>
        <strain>K12 / W3110 / ATCC 27325 / DSM 5911</strain>
    </source>
</reference>
<reference key="2">
    <citation type="journal article" date="1997" name="Science">
        <title>The complete genome sequence of Escherichia coli K-12.</title>
        <authorList>
            <person name="Blattner F.R."/>
            <person name="Plunkett G. III"/>
            <person name="Bloch C.A."/>
            <person name="Perna N.T."/>
            <person name="Burland V."/>
            <person name="Riley M."/>
            <person name="Collado-Vides J."/>
            <person name="Glasner J.D."/>
            <person name="Rode C.K."/>
            <person name="Mayhew G.F."/>
            <person name="Gregor J."/>
            <person name="Davis N.W."/>
            <person name="Kirkpatrick H.A."/>
            <person name="Goeden M.A."/>
            <person name="Rose D.J."/>
            <person name="Mau B."/>
            <person name="Shao Y."/>
        </authorList>
    </citation>
    <scope>NUCLEOTIDE SEQUENCE [LARGE SCALE GENOMIC DNA]</scope>
    <source>
        <strain>K12 / MG1655 / ATCC 47076</strain>
    </source>
</reference>
<reference key="3">
    <citation type="journal article" date="2006" name="Mol. Syst. Biol.">
        <title>Highly accurate genome sequences of Escherichia coli K-12 strains MG1655 and W3110.</title>
        <authorList>
            <person name="Hayashi K."/>
            <person name="Morooka N."/>
            <person name="Yamamoto Y."/>
            <person name="Fujita K."/>
            <person name="Isono K."/>
            <person name="Choi S."/>
            <person name="Ohtsubo E."/>
            <person name="Baba T."/>
            <person name="Wanner B.L."/>
            <person name="Mori H."/>
            <person name="Horiuchi T."/>
        </authorList>
    </citation>
    <scope>NUCLEOTIDE SEQUENCE [LARGE SCALE GENOMIC DNA]</scope>
    <scope>SEQUENCE REVISION TO 255</scope>
    <source>
        <strain>K12 / W3110 / ATCC 27325 / DSM 5911</strain>
    </source>
</reference>
<comment type="interaction">
    <interactant intactId="EBI-544654">
        <id>P76049</id>
    </interactant>
    <interactant intactId="EBI-542683">
        <id>P0AFG8</id>
        <label>aceE</label>
    </interactant>
    <organismsDiffer>false</organismsDiffer>
    <experiments>2</experiments>
</comment>
<comment type="sequence caution" evidence="1">
    <conflict type="erroneous initiation">
        <sequence resource="EMBL-CDS" id="BAA14909"/>
    </conflict>
    <text>Extended N-terminus.</text>
</comment>
<proteinExistence type="evidence at protein level"/>
<name>YCJY_ECOLI</name>
<gene>
    <name type="primary">ycjY</name>
    <name type="ordered locus">b1327</name>
    <name type="ordered locus">JW5804</name>
</gene>
<feature type="chain" id="PRO_0000168898" description="Uncharacterized protein YcjY">
    <location>
        <begin position="1"/>
        <end position="306"/>
    </location>
</feature>
<feature type="strand" evidence="2">
    <location>
        <begin position="3"/>
        <end position="9"/>
    </location>
</feature>
<feature type="strand" evidence="2">
    <location>
        <begin position="17"/>
        <end position="23"/>
    </location>
</feature>
<feature type="strand" evidence="2">
    <location>
        <begin position="34"/>
        <end position="40"/>
    </location>
</feature>
<feature type="helix" evidence="2">
    <location>
        <begin position="50"/>
        <end position="60"/>
    </location>
</feature>
<feature type="strand" evidence="2">
    <location>
        <begin position="64"/>
        <end position="68"/>
    </location>
</feature>
<feature type="helix" evidence="2">
    <location>
        <begin position="86"/>
        <end position="101"/>
    </location>
</feature>
<feature type="strand" evidence="2">
    <location>
        <begin position="106"/>
        <end position="116"/>
    </location>
</feature>
<feature type="helix" evidence="2">
    <location>
        <begin position="119"/>
        <end position="129"/>
    </location>
</feature>
<feature type="strand" evidence="2">
    <location>
        <begin position="136"/>
        <end position="140"/>
    </location>
</feature>
<feature type="helix" evidence="2">
    <location>
        <begin position="144"/>
        <end position="150"/>
    </location>
</feature>
<feature type="turn" evidence="2">
    <location>
        <begin position="151"/>
        <end position="154"/>
    </location>
</feature>
<feature type="helix" evidence="2">
    <location>
        <begin position="158"/>
        <end position="161"/>
    </location>
</feature>
<feature type="helix" evidence="2">
    <location>
        <begin position="162"/>
        <end position="178"/>
    </location>
</feature>
<feature type="strand" evidence="2">
    <location>
        <begin position="183"/>
        <end position="187"/>
    </location>
</feature>
<feature type="helix" evidence="2">
    <location>
        <begin position="191"/>
        <end position="193"/>
    </location>
</feature>
<feature type="helix" evidence="2">
    <location>
        <begin position="197"/>
        <end position="207"/>
    </location>
</feature>
<feature type="turn" evidence="2">
    <location>
        <begin position="209"/>
        <end position="211"/>
    </location>
</feature>
<feature type="strand" evidence="2">
    <location>
        <begin position="218"/>
        <end position="221"/>
    </location>
</feature>
<feature type="helix" evidence="2">
    <location>
        <begin position="222"/>
        <end position="224"/>
    </location>
</feature>
<feature type="helix" evidence="2">
    <location>
        <begin position="225"/>
        <end position="229"/>
    </location>
</feature>
<feature type="turn" evidence="2">
    <location>
        <begin position="233"/>
        <end position="236"/>
    </location>
</feature>
<feature type="helix" evidence="2">
    <location>
        <begin position="237"/>
        <end position="240"/>
    </location>
</feature>
<feature type="strand" evidence="2">
    <location>
        <begin position="245"/>
        <end position="250"/>
    </location>
</feature>
<feature type="helix" evidence="2">
    <location>
        <begin position="256"/>
        <end position="265"/>
    </location>
</feature>
<feature type="strand" evidence="2">
    <location>
        <begin position="269"/>
        <end position="276"/>
    </location>
</feature>
<feature type="helix" evidence="2">
    <location>
        <begin position="283"/>
        <end position="286"/>
    </location>
</feature>
<feature type="helix" evidence="2">
    <location>
        <begin position="288"/>
        <end position="305"/>
    </location>
</feature>